<protein>
    <recommendedName>
        <fullName>Cyclic AMP receptor-like protein B</fullName>
    </recommendedName>
</protein>
<reference key="1">
    <citation type="journal article" date="2004" name="Dev. Biol.">
        <title>A cAMP receptor-like G protein-coupled receptor with roles in growth regulation and development.</title>
        <authorList>
            <person name="Raisley B."/>
            <person name="Zhang M."/>
            <person name="Hereld D."/>
            <person name="Hadwiger J.A."/>
        </authorList>
    </citation>
    <scope>NUCLEOTIDE SEQUENCE [GENOMIC DNA]</scope>
    <scope>DEVELOPMENTAL STAGE</scope>
</reference>
<reference key="2">
    <citation type="journal article" date="2005" name="Nature">
        <title>The genome of the social amoeba Dictyostelium discoideum.</title>
        <authorList>
            <person name="Eichinger L."/>
            <person name="Pachebat J.A."/>
            <person name="Gloeckner G."/>
            <person name="Rajandream M.A."/>
            <person name="Sucgang R."/>
            <person name="Berriman M."/>
            <person name="Song J."/>
            <person name="Olsen R."/>
            <person name="Szafranski K."/>
            <person name="Xu Q."/>
            <person name="Tunggal B."/>
            <person name="Kummerfeld S."/>
            <person name="Madera M."/>
            <person name="Konfortov B.A."/>
            <person name="Rivero F."/>
            <person name="Bankier A.T."/>
            <person name="Lehmann R."/>
            <person name="Hamlin N."/>
            <person name="Davies R."/>
            <person name="Gaudet P."/>
            <person name="Fey P."/>
            <person name="Pilcher K."/>
            <person name="Chen G."/>
            <person name="Saunders D."/>
            <person name="Sodergren E.J."/>
            <person name="Davis P."/>
            <person name="Kerhornou A."/>
            <person name="Nie X."/>
            <person name="Hall N."/>
            <person name="Anjard C."/>
            <person name="Hemphill L."/>
            <person name="Bason N."/>
            <person name="Farbrother P."/>
            <person name="Desany B."/>
            <person name="Just E."/>
            <person name="Morio T."/>
            <person name="Rost R."/>
            <person name="Churcher C.M."/>
            <person name="Cooper J."/>
            <person name="Haydock S."/>
            <person name="van Driessche N."/>
            <person name="Cronin A."/>
            <person name="Goodhead I."/>
            <person name="Muzny D.M."/>
            <person name="Mourier T."/>
            <person name="Pain A."/>
            <person name="Lu M."/>
            <person name="Harper D."/>
            <person name="Lindsay R."/>
            <person name="Hauser H."/>
            <person name="James K.D."/>
            <person name="Quiles M."/>
            <person name="Madan Babu M."/>
            <person name="Saito T."/>
            <person name="Buchrieser C."/>
            <person name="Wardroper A."/>
            <person name="Felder M."/>
            <person name="Thangavelu M."/>
            <person name="Johnson D."/>
            <person name="Knights A."/>
            <person name="Loulseged H."/>
            <person name="Mungall K.L."/>
            <person name="Oliver K."/>
            <person name="Price C."/>
            <person name="Quail M.A."/>
            <person name="Urushihara H."/>
            <person name="Hernandez J."/>
            <person name="Rabbinowitsch E."/>
            <person name="Steffen D."/>
            <person name="Sanders M."/>
            <person name="Ma J."/>
            <person name="Kohara Y."/>
            <person name="Sharp S."/>
            <person name="Simmonds M.N."/>
            <person name="Spiegler S."/>
            <person name="Tivey A."/>
            <person name="Sugano S."/>
            <person name="White B."/>
            <person name="Walker D."/>
            <person name="Woodward J.R."/>
            <person name="Winckler T."/>
            <person name="Tanaka Y."/>
            <person name="Shaulsky G."/>
            <person name="Schleicher M."/>
            <person name="Weinstock G.M."/>
            <person name="Rosenthal A."/>
            <person name="Cox E.C."/>
            <person name="Chisholm R.L."/>
            <person name="Gibbs R.A."/>
            <person name="Loomis W.F."/>
            <person name="Platzer M."/>
            <person name="Kay R.R."/>
            <person name="Williams J.G."/>
            <person name="Dear P.H."/>
            <person name="Noegel A.A."/>
            <person name="Barrell B.G."/>
            <person name="Kuspa A."/>
        </authorList>
    </citation>
    <scope>NUCLEOTIDE SEQUENCE [LARGE SCALE GENOMIC DNA]</scope>
    <source>
        <strain>AX4</strain>
    </source>
</reference>
<reference key="3">
    <citation type="journal article" date="2006" name="Eur. J. Cell Biol.">
        <title>The Dictyostelium repertoire of seven transmembrane domain receptors.</title>
        <authorList>
            <person name="Prabhu Y."/>
            <person name="Eichinger L."/>
        </authorList>
    </citation>
    <scope>NOMENCLATURE</scope>
</reference>
<feature type="chain" id="PRO_0000327675" description="Cyclic AMP receptor-like protein B">
    <location>
        <begin position="1"/>
        <end position="442"/>
    </location>
</feature>
<feature type="topological domain" description="Extracellular" evidence="2">
    <location>
        <begin position="1"/>
        <end position="16"/>
    </location>
</feature>
<feature type="transmembrane region" description="Helical; Name=1" evidence="2">
    <location>
        <begin position="17"/>
        <end position="37"/>
    </location>
</feature>
<feature type="topological domain" description="Cytoplasmic" evidence="2">
    <location>
        <begin position="38"/>
        <end position="219"/>
    </location>
</feature>
<feature type="transmembrane region" description="Helical; Name=2" evidence="2">
    <location>
        <begin position="220"/>
        <end position="240"/>
    </location>
</feature>
<feature type="topological domain" description="Extracellular" evidence="2">
    <location>
        <begin position="241"/>
        <end position="255"/>
    </location>
</feature>
<feature type="transmembrane region" description="Helical; Name=3" evidence="2">
    <location>
        <begin position="256"/>
        <end position="276"/>
    </location>
</feature>
<feature type="topological domain" description="Cytoplasmic" evidence="2">
    <location>
        <begin position="277"/>
        <end position="289"/>
    </location>
</feature>
<feature type="transmembrane region" description="Helical; Name=4" evidence="2">
    <location>
        <begin position="290"/>
        <end position="310"/>
    </location>
</feature>
<feature type="topological domain" description="Extracellular" evidence="2">
    <location>
        <begin position="311"/>
        <end position="334"/>
    </location>
</feature>
<feature type="transmembrane region" description="Helical; Name=5" evidence="2">
    <location>
        <begin position="335"/>
        <end position="355"/>
    </location>
</feature>
<feature type="topological domain" description="Cytoplasmic" evidence="2">
    <location>
        <begin position="356"/>
        <end position="382"/>
    </location>
</feature>
<feature type="transmembrane region" description="Helical; Name=6" evidence="2">
    <location>
        <begin position="383"/>
        <end position="403"/>
    </location>
</feature>
<feature type="topological domain" description="Extracellular" evidence="2">
    <location>
        <begin position="404"/>
        <end position="410"/>
    </location>
</feature>
<feature type="transmembrane region" description="Helical; Name=7" evidence="2">
    <location>
        <begin position="411"/>
        <end position="431"/>
    </location>
</feature>
<feature type="topological domain" description="Cytoplasmic" evidence="2">
    <location>
        <begin position="432"/>
        <end position="442"/>
    </location>
</feature>
<feature type="region of interest" description="Disordered" evidence="3">
    <location>
        <begin position="83"/>
        <end position="166"/>
    </location>
</feature>
<feature type="compositionally biased region" description="Low complexity" evidence="3">
    <location>
        <begin position="91"/>
        <end position="103"/>
    </location>
</feature>
<feature type="compositionally biased region" description="Polar residues" evidence="3">
    <location>
        <begin position="112"/>
        <end position="122"/>
    </location>
</feature>
<feature type="compositionally biased region" description="Low complexity" evidence="3">
    <location>
        <begin position="123"/>
        <end position="144"/>
    </location>
</feature>
<feature type="compositionally biased region" description="Polar residues" evidence="3">
    <location>
        <begin position="145"/>
        <end position="166"/>
    </location>
</feature>
<name>CRLB_DICDI</name>
<evidence type="ECO:0000250" key="1"/>
<evidence type="ECO:0000255" key="2"/>
<evidence type="ECO:0000256" key="3">
    <source>
        <dbReference type="SAM" id="MobiDB-lite"/>
    </source>
</evidence>
<evidence type="ECO:0000269" key="4">
    <source>
    </source>
</evidence>
<evidence type="ECO:0000305" key="5"/>
<keyword id="KW-0297">G-protein coupled receptor</keyword>
<keyword id="KW-0472">Membrane</keyword>
<keyword id="KW-0675">Receptor</keyword>
<keyword id="KW-1185">Reference proteome</keyword>
<keyword id="KW-0807">Transducer</keyword>
<keyword id="KW-0812">Transmembrane</keyword>
<keyword id="KW-1133">Transmembrane helix</keyword>
<comment type="function">
    <text evidence="1">Receptor for cAMP.</text>
</comment>
<comment type="subcellular location">
    <subcellularLocation>
        <location evidence="5">Membrane</location>
        <topology evidence="5">Multi-pass membrane protein</topology>
    </subcellularLocation>
</comment>
<comment type="developmental stage">
    <text evidence="4">Only detected in post-aggregative developmental stages, peaking after 16 hours of starvation.</text>
</comment>
<comment type="similarity">
    <text evidence="5">Belongs to the G-protein coupled receptor 5 family.</text>
</comment>
<proteinExistence type="evidence at transcript level"/>
<dbReference type="EMBL" id="AY360136">
    <property type="protein sequence ID" value="AAQ63681.1"/>
    <property type="molecule type" value="Genomic_DNA"/>
</dbReference>
<dbReference type="EMBL" id="AAFI02000140">
    <property type="protein sequence ID" value="EAL62725.1"/>
    <property type="molecule type" value="Genomic_DNA"/>
</dbReference>
<dbReference type="RefSeq" id="XP_636227.1">
    <property type="nucleotide sequence ID" value="XM_631135.1"/>
</dbReference>
<dbReference type="SMR" id="Q6UUW5"/>
<dbReference type="FunCoup" id="Q6UUW5">
    <property type="interactions" value="28"/>
</dbReference>
<dbReference type="PaxDb" id="44689-DDB0191394"/>
<dbReference type="EnsemblProtists" id="EAL62725">
    <property type="protein sequence ID" value="EAL62725"/>
    <property type="gene ID" value="DDB_G0289395"/>
</dbReference>
<dbReference type="GeneID" id="8627115"/>
<dbReference type="KEGG" id="ddi:DDB_G0289395"/>
<dbReference type="dictyBase" id="DDB_G0289395">
    <property type="gene designation" value="crlB"/>
</dbReference>
<dbReference type="VEuPathDB" id="AmoebaDB:DDB_G0289395"/>
<dbReference type="eggNOG" id="ENOG502RDFX">
    <property type="taxonomic scope" value="Eukaryota"/>
</dbReference>
<dbReference type="HOGENOM" id="CLU_620281_0_0_1"/>
<dbReference type="InParanoid" id="Q6UUW5"/>
<dbReference type="OMA" id="CITARAT"/>
<dbReference type="PhylomeDB" id="Q6UUW5"/>
<dbReference type="PRO" id="PR:Q6UUW5"/>
<dbReference type="Proteomes" id="UP000002195">
    <property type="component" value="Chromosome 5"/>
</dbReference>
<dbReference type="GO" id="GO:0005886">
    <property type="term" value="C:plasma membrane"/>
    <property type="evidence" value="ECO:0000318"/>
    <property type="project" value="GO_Central"/>
</dbReference>
<dbReference type="GO" id="GO:0030552">
    <property type="term" value="F:cAMP binding"/>
    <property type="evidence" value="ECO:0007669"/>
    <property type="project" value="InterPro"/>
</dbReference>
<dbReference type="GO" id="GO:0001646">
    <property type="term" value="F:cAMP receptor activity"/>
    <property type="evidence" value="ECO:0000250"/>
    <property type="project" value="dictyBase"/>
</dbReference>
<dbReference type="GO" id="GO:0004930">
    <property type="term" value="F:G protein-coupled receptor activity"/>
    <property type="evidence" value="ECO:0000318"/>
    <property type="project" value="GO_Central"/>
</dbReference>
<dbReference type="GO" id="GO:0007189">
    <property type="term" value="P:adenylate cyclase-activating G protein-coupled receptor signaling pathway"/>
    <property type="evidence" value="ECO:0000318"/>
    <property type="project" value="GO_Central"/>
</dbReference>
<dbReference type="Gene3D" id="1.20.1070.10">
    <property type="entry name" value="Rhodopsin 7-helix transmembrane proteins"/>
    <property type="match status" value="1"/>
</dbReference>
<dbReference type="InterPro" id="IPR017981">
    <property type="entry name" value="GPCR_2-like_7TM"/>
</dbReference>
<dbReference type="InterPro" id="IPR000848">
    <property type="entry name" value="GPCR_cAMP"/>
</dbReference>
<dbReference type="PANTHER" id="PTHR23112">
    <property type="entry name" value="G PROTEIN-COUPLED RECEPTOR 157-RELATED"/>
    <property type="match status" value="1"/>
</dbReference>
<dbReference type="PANTHER" id="PTHR23112:SF0">
    <property type="entry name" value="TRANSMEMBRANE PROTEIN 116"/>
    <property type="match status" value="1"/>
</dbReference>
<dbReference type="PRINTS" id="PR00247">
    <property type="entry name" value="GPCRCAMP"/>
</dbReference>
<dbReference type="SUPFAM" id="SSF81321">
    <property type="entry name" value="Family A G protein-coupled receptor-like"/>
    <property type="match status" value="1"/>
</dbReference>
<dbReference type="PROSITE" id="PS50261">
    <property type="entry name" value="G_PROTEIN_RECEP_F2_4"/>
    <property type="match status" value="1"/>
</dbReference>
<sequence>MGGDIHLCSMILGKNHLIFLYFANLFGSTLSFLATIITIVFYLVKKYIQNKSFRENPHQYCHQHQYFDSSKLNEINNSGVGSYSSTPISIQNNNNKNNNLPKQKNNEKQPLINKNHNNYCNYSTSATSSSSSSSSFSSTNSGSSYEYQQPQKNQQTLSSSDKNNTIPSTNTKYEIELSIPQFKGNKCGPNCLLFSNIPQIKNALEQKKNPKKIDTLIFYLSISDFIAVSGIIIEQLIIIFNKEISKSIGFCIGERVSIHFGLLATLFWSNCIAYYLLRETYELKPYNIRFVYFHIVCWGMALIGVASLFFSKIITVSNIDQGGSWCSVSSSYQLYFWVIPLFVSFTWNLICYCLIYRKFNKIIGIYGIQSVQIKTIIIRKLSFYLLAFLITWVWDVINNSIFLYEGKCPPFALWILQEFFSSGYGFFNSLAYAVTTRFYSRK</sequence>
<accession>Q6UUW5</accession>
<accession>Q54HK6</accession>
<organism>
    <name type="scientific">Dictyostelium discoideum</name>
    <name type="common">Social amoeba</name>
    <dbReference type="NCBI Taxonomy" id="44689"/>
    <lineage>
        <taxon>Eukaryota</taxon>
        <taxon>Amoebozoa</taxon>
        <taxon>Evosea</taxon>
        <taxon>Eumycetozoa</taxon>
        <taxon>Dictyostelia</taxon>
        <taxon>Dictyosteliales</taxon>
        <taxon>Dictyosteliaceae</taxon>
        <taxon>Dictyostelium</taxon>
    </lineage>
</organism>
<gene>
    <name type="primary">crlB</name>
    <name type="ORF">DDB_G0289395</name>
</gene>